<reference key="1">
    <citation type="journal article" date="2005" name="J. Bacteriol.">
        <title>Swine and poultry pathogens: the complete genome sequences of two strains of Mycoplasma hyopneumoniae and a strain of Mycoplasma synoviae.</title>
        <authorList>
            <person name="Vasconcelos A.T.R."/>
            <person name="Ferreira H.B."/>
            <person name="Bizarro C.V."/>
            <person name="Bonatto S.L."/>
            <person name="Carvalho M.O."/>
            <person name="Pinto P.M."/>
            <person name="Almeida D.F."/>
            <person name="Almeida L.G.P."/>
            <person name="Almeida R."/>
            <person name="Alves-Junior L."/>
            <person name="Assuncao E.N."/>
            <person name="Azevedo V.A.C."/>
            <person name="Bogo M.R."/>
            <person name="Brigido M.M."/>
            <person name="Brocchi M."/>
            <person name="Burity H.A."/>
            <person name="Camargo A.A."/>
            <person name="Camargo S.S."/>
            <person name="Carepo M.S."/>
            <person name="Carraro D.M."/>
            <person name="de Mattos Cascardo J.C."/>
            <person name="Castro L.A."/>
            <person name="Cavalcanti G."/>
            <person name="Chemale G."/>
            <person name="Collevatti R.G."/>
            <person name="Cunha C.W."/>
            <person name="Dallagiovanna B."/>
            <person name="Dambros B.P."/>
            <person name="Dellagostin O.A."/>
            <person name="Falcao C."/>
            <person name="Fantinatti-Garboggini F."/>
            <person name="Felipe M.S.S."/>
            <person name="Fiorentin L."/>
            <person name="Franco G.R."/>
            <person name="Freitas N.S.A."/>
            <person name="Frias D."/>
            <person name="Grangeiro T.B."/>
            <person name="Grisard E.C."/>
            <person name="Guimaraes C.T."/>
            <person name="Hungria M."/>
            <person name="Jardim S.N."/>
            <person name="Krieger M.A."/>
            <person name="Laurino J.P."/>
            <person name="Lima L.F.A."/>
            <person name="Lopes M.I."/>
            <person name="Loreto E.L.S."/>
            <person name="Madeira H.M.F."/>
            <person name="Manfio G.P."/>
            <person name="Maranhao A.Q."/>
            <person name="Martinkovics C.T."/>
            <person name="Medeiros S.R.B."/>
            <person name="Moreira M.A.M."/>
            <person name="Neiva M."/>
            <person name="Ramalho-Neto C.E."/>
            <person name="Nicolas M.F."/>
            <person name="Oliveira S.C."/>
            <person name="Paixao R.F.C."/>
            <person name="Pedrosa F.O."/>
            <person name="Pena S.D.J."/>
            <person name="Pereira M."/>
            <person name="Pereira-Ferrari L."/>
            <person name="Piffer I."/>
            <person name="Pinto L.S."/>
            <person name="Potrich D.P."/>
            <person name="Salim A.C.M."/>
            <person name="Santos F.R."/>
            <person name="Schmitt R."/>
            <person name="Schneider M.P.C."/>
            <person name="Schrank A."/>
            <person name="Schrank I.S."/>
            <person name="Schuck A.F."/>
            <person name="Seuanez H.N."/>
            <person name="Silva D.W."/>
            <person name="Silva R."/>
            <person name="Silva S.C."/>
            <person name="Soares C.M.A."/>
            <person name="Souza K.R.L."/>
            <person name="Souza R.C."/>
            <person name="Staats C.C."/>
            <person name="Steffens M.B.R."/>
            <person name="Teixeira S.M.R."/>
            <person name="Urmenyi T.P."/>
            <person name="Vainstein M.H."/>
            <person name="Zuccherato L.W."/>
            <person name="Simpson A.J.G."/>
            <person name="Zaha A."/>
        </authorList>
    </citation>
    <scope>NUCLEOTIDE SEQUENCE [LARGE SCALE GENOMIC DNA]</scope>
    <source>
        <strain>53</strain>
    </source>
</reference>
<dbReference type="EMBL" id="AE017245">
    <property type="protein sequence ID" value="AAZ43584.1"/>
    <property type="molecule type" value="Genomic_DNA"/>
</dbReference>
<dbReference type="RefSeq" id="WP_011283327.1">
    <property type="nucleotide sequence ID" value="NC_007294.1"/>
</dbReference>
<dbReference type="SMR" id="Q4A6N7"/>
<dbReference type="STRING" id="262723.MS53_0164"/>
<dbReference type="GeneID" id="93529979"/>
<dbReference type="KEGG" id="msy:MS53_0164"/>
<dbReference type="eggNOG" id="COG0632">
    <property type="taxonomic scope" value="Bacteria"/>
</dbReference>
<dbReference type="HOGENOM" id="CLU_087936_1_1_14"/>
<dbReference type="OrthoDB" id="5293449at2"/>
<dbReference type="Proteomes" id="UP000000549">
    <property type="component" value="Chromosome"/>
</dbReference>
<dbReference type="GO" id="GO:0005737">
    <property type="term" value="C:cytoplasm"/>
    <property type="evidence" value="ECO:0007669"/>
    <property type="project" value="UniProtKB-SubCell"/>
</dbReference>
<dbReference type="GO" id="GO:0048476">
    <property type="term" value="C:Holliday junction resolvase complex"/>
    <property type="evidence" value="ECO:0007669"/>
    <property type="project" value="UniProtKB-UniRule"/>
</dbReference>
<dbReference type="GO" id="GO:0003678">
    <property type="term" value="F:DNA helicase activity"/>
    <property type="evidence" value="ECO:0007669"/>
    <property type="project" value="InterPro"/>
</dbReference>
<dbReference type="GO" id="GO:0000400">
    <property type="term" value="F:four-way junction DNA binding"/>
    <property type="evidence" value="ECO:0007669"/>
    <property type="project" value="UniProtKB-UniRule"/>
</dbReference>
<dbReference type="GO" id="GO:0006310">
    <property type="term" value="P:DNA recombination"/>
    <property type="evidence" value="ECO:0007669"/>
    <property type="project" value="UniProtKB-UniRule"/>
</dbReference>
<dbReference type="GO" id="GO:0006281">
    <property type="term" value="P:DNA repair"/>
    <property type="evidence" value="ECO:0007669"/>
    <property type="project" value="UniProtKB-UniRule"/>
</dbReference>
<dbReference type="Gene3D" id="1.10.150.20">
    <property type="entry name" value="5' to 3' exonuclease, C-terminal subdomain"/>
    <property type="match status" value="1"/>
</dbReference>
<dbReference type="HAMAP" id="MF_00031">
    <property type="entry name" value="DNA_HJ_migration_RuvA"/>
    <property type="match status" value="1"/>
</dbReference>
<dbReference type="InterPro" id="IPR000085">
    <property type="entry name" value="RuvA"/>
</dbReference>
<dbReference type="InterPro" id="IPR010994">
    <property type="entry name" value="RuvA_2-like"/>
</dbReference>
<dbReference type="NCBIfam" id="TIGR00084">
    <property type="entry name" value="ruvA"/>
    <property type="match status" value="1"/>
</dbReference>
<dbReference type="Pfam" id="PF14520">
    <property type="entry name" value="HHH_5"/>
    <property type="match status" value="1"/>
</dbReference>
<dbReference type="SUPFAM" id="SSF47781">
    <property type="entry name" value="RuvA domain 2-like"/>
    <property type="match status" value="1"/>
</dbReference>
<protein>
    <recommendedName>
        <fullName evidence="1">Holliday junction branch migration complex subunit RuvA</fullName>
    </recommendedName>
</protein>
<keyword id="KW-0963">Cytoplasm</keyword>
<keyword id="KW-0227">DNA damage</keyword>
<keyword id="KW-0233">DNA recombination</keyword>
<keyword id="KW-0234">DNA repair</keyword>
<keyword id="KW-0238">DNA-binding</keyword>
<keyword id="KW-1185">Reference proteome</keyword>
<feature type="chain" id="PRO_1000195165" description="Holliday junction branch migration complex subunit RuvA">
    <location>
        <begin position="1"/>
        <end position="198"/>
    </location>
</feature>
<feature type="region of interest" description="Domain I" evidence="1">
    <location>
        <begin position="1"/>
        <end position="61"/>
    </location>
</feature>
<feature type="region of interest" description="Domain II" evidence="1">
    <location>
        <begin position="62"/>
        <end position="139"/>
    </location>
</feature>
<feature type="region of interest" description="Flexible linker" evidence="1">
    <location>
        <begin position="140"/>
        <end position="144"/>
    </location>
</feature>
<feature type="region of interest" description="Domain III" evidence="1">
    <location>
        <begin position="144"/>
        <end position="198"/>
    </location>
</feature>
<comment type="function">
    <text evidence="1">The RuvA-RuvB-RuvC complex processes Holliday junction (HJ) DNA during genetic recombination and DNA repair, while the RuvA-RuvB complex plays an important role in the rescue of blocked DNA replication forks via replication fork reversal (RFR). RuvA specifically binds to HJ cruciform DNA, conferring on it an open structure. The RuvB hexamer acts as an ATP-dependent pump, pulling dsDNA into and through the RuvAB complex. HJ branch migration allows RuvC to scan DNA until it finds its consensus sequence, where it cleaves and resolves the cruciform DNA.</text>
</comment>
<comment type="subunit">
    <text evidence="1">Homotetramer. Forms an RuvA(8)-RuvB(12)-Holliday junction (HJ) complex. HJ DNA is sandwiched between 2 RuvA tetramers; dsDNA enters through RuvA and exits via RuvB. An RuvB hexamer assembles on each DNA strand where it exits the tetramer. Each RuvB hexamer is contacted by two RuvA subunits (via domain III) on 2 adjacent RuvB subunits; this complex drives branch migration. In the full resolvosome a probable DNA-RuvA(4)-RuvB(12)-RuvC(2) complex forms which resolves the HJ.</text>
</comment>
<comment type="subcellular location">
    <subcellularLocation>
        <location evidence="1">Cytoplasm</location>
    </subcellularLocation>
</comment>
<comment type="domain">
    <text evidence="1">Has three domains with a flexible linker between the domains II and III and assumes an 'L' shape. Domain III is highly mobile and contacts RuvB.</text>
</comment>
<comment type="similarity">
    <text evidence="1">Belongs to the RuvA family.</text>
</comment>
<proteinExistence type="inferred from homology"/>
<accession>Q4A6N7</accession>
<gene>
    <name evidence="1" type="primary">ruvA</name>
    <name type="ordered locus">MS53_0164</name>
</gene>
<evidence type="ECO:0000255" key="1">
    <source>
        <dbReference type="HAMAP-Rule" id="MF_00031"/>
    </source>
</evidence>
<name>RUVA_MYCS5</name>
<organism>
    <name type="scientific">Mycoplasmopsis synoviae (strain 53)</name>
    <name type="common">Mycoplasma synoviae</name>
    <dbReference type="NCBI Taxonomy" id="262723"/>
    <lineage>
        <taxon>Bacteria</taxon>
        <taxon>Bacillati</taxon>
        <taxon>Mycoplasmatota</taxon>
        <taxon>Mycoplasmoidales</taxon>
        <taxon>Metamycoplasmataceae</taxon>
        <taxon>Mycoplasmopsis</taxon>
    </lineage>
</organism>
<sequence>MTLYKIGEIVYKNNNNIILESKGEGNLVTICDNSRYSKGEKLKLYLYEVKNDYIQQTYGFKTFKERLLFTDLISIDKIGPKTAMLILDQNWELVANLIAEGDWKEISKINYISDKSAKLICVELKDKWAKIIQNKEVKKFDDITNIKELKQTLNKLGFKASDIDYAVNNISSTKELDLMVEESINLITTQMHANNQTT</sequence>